<keyword id="KW-0028">Amino-acid biosynthesis</keyword>
<keyword id="KW-0057">Aromatic amino acid biosynthesis</keyword>
<keyword id="KW-0521">NADP</keyword>
<keyword id="KW-0560">Oxidoreductase</keyword>
<sequence length="286" mass="31070">MGDSRETHGLNAFVTGYPVKHSRSPLIHGYWLRTLNLAGSYRAVEVTPDDFPAFIAALKDRSSGFVGGNVTIPHKEIAFKLADRPDELSEELGASNTLWLEDGLLHATNTDGRGFTANLDECHPGWDRTDRAVILGAGGASRAVIQAVRDRGVNEIHVVNRTVERAQELSDRFGAQVHAHPMAALGEVMRSAGLFVNTTSLGMENEVAPTIDFSPLAENAVVTDIVYVPLKTPLLAQAEEQGFATVDGLGMLLHQAAPGFETWFGKRPVVDEVLRALIIADMDKHR</sequence>
<gene>
    <name evidence="1" type="primary">aroE</name>
    <name type="ordered locus">Arad_0002</name>
</gene>
<organism>
    <name type="scientific">Rhizobium rhizogenes (strain K84 / ATCC BAA-868)</name>
    <name type="common">Agrobacterium radiobacter</name>
    <dbReference type="NCBI Taxonomy" id="311403"/>
    <lineage>
        <taxon>Bacteria</taxon>
        <taxon>Pseudomonadati</taxon>
        <taxon>Pseudomonadota</taxon>
        <taxon>Alphaproteobacteria</taxon>
        <taxon>Hyphomicrobiales</taxon>
        <taxon>Rhizobiaceae</taxon>
        <taxon>Rhizobium/Agrobacterium group</taxon>
        <taxon>Rhizobium</taxon>
    </lineage>
</organism>
<proteinExistence type="inferred from homology"/>
<evidence type="ECO:0000255" key="1">
    <source>
        <dbReference type="HAMAP-Rule" id="MF_00222"/>
    </source>
</evidence>
<comment type="function">
    <text evidence="1">Involved in the biosynthesis of the chorismate, which leads to the biosynthesis of aromatic amino acids. Catalyzes the reversible NADPH linked reduction of 3-dehydroshikimate (DHSA) to yield shikimate (SA).</text>
</comment>
<comment type="catalytic activity">
    <reaction evidence="1">
        <text>shikimate + NADP(+) = 3-dehydroshikimate + NADPH + H(+)</text>
        <dbReference type="Rhea" id="RHEA:17737"/>
        <dbReference type="ChEBI" id="CHEBI:15378"/>
        <dbReference type="ChEBI" id="CHEBI:16630"/>
        <dbReference type="ChEBI" id="CHEBI:36208"/>
        <dbReference type="ChEBI" id="CHEBI:57783"/>
        <dbReference type="ChEBI" id="CHEBI:58349"/>
        <dbReference type="EC" id="1.1.1.25"/>
    </reaction>
</comment>
<comment type="pathway">
    <text evidence="1">Metabolic intermediate biosynthesis; chorismate biosynthesis; chorismate from D-erythrose 4-phosphate and phosphoenolpyruvate: step 4/7.</text>
</comment>
<comment type="subunit">
    <text evidence="1">Homodimer.</text>
</comment>
<comment type="similarity">
    <text evidence="1">Belongs to the shikimate dehydrogenase family.</text>
</comment>
<feature type="chain" id="PRO_1000124868" description="Shikimate dehydrogenase (NADP(+))">
    <location>
        <begin position="1"/>
        <end position="286"/>
    </location>
</feature>
<feature type="active site" description="Proton acceptor" evidence="1">
    <location>
        <position position="75"/>
    </location>
</feature>
<feature type="binding site" evidence="1">
    <location>
        <begin position="22"/>
        <end position="24"/>
    </location>
    <ligand>
        <name>shikimate</name>
        <dbReference type="ChEBI" id="CHEBI:36208"/>
    </ligand>
</feature>
<feature type="binding site" evidence="1">
    <location>
        <position position="71"/>
    </location>
    <ligand>
        <name>shikimate</name>
        <dbReference type="ChEBI" id="CHEBI:36208"/>
    </ligand>
</feature>
<feature type="binding site" evidence="1">
    <location>
        <position position="87"/>
    </location>
    <ligand>
        <name>NADP(+)</name>
        <dbReference type="ChEBI" id="CHEBI:58349"/>
    </ligand>
</feature>
<feature type="binding site" evidence="1">
    <location>
        <position position="96"/>
    </location>
    <ligand>
        <name>shikimate</name>
        <dbReference type="ChEBI" id="CHEBI:36208"/>
    </ligand>
</feature>
<feature type="binding site" evidence="1">
    <location>
        <position position="111"/>
    </location>
    <ligand>
        <name>shikimate</name>
        <dbReference type="ChEBI" id="CHEBI:36208"/>
    </ligand>
</feature>
<feature type="binding site" evidence="1">
    <location>
        <begin position="136"/>
        <end position="140"/>
    </location>
    <ligand>
        <name>NADP(+)</name>
        <dbReference type="ChEBI" id="CHEBI:58349"/>
    </ligand>
</feature>
<feature type="binding site" evidence="1">
    <location>
        <begin position="160"/>
        <end position="165"/>
    </location>
    <ligand>
        <name>NADP(+)</name>
        <dbReference type="ChEBI" id="CHEBI:58349"/>
    </ligand>
</feature>
<feature type="binding site" evidence="1">
    <location>
        <position position="225"/>
    </location>
    <ligand>
        <name>NADP(+)</name>
        <dbReference type="ChEBI" id="CHEBI:58349"/>
    </ligand>
</feature>
<feature type="binding site" evidence="1">
    <location>
        <position position="227"/>
    </location>
    <ligand>
        <name>shikimate</name>
        <dbReference type="ChEBI" id="CHEBI:36208"/>
    </ligand>
</feature>
<feature type="binding site" evidence="1">
    <location>
        <position position="248"/>
    </location>
    <ligand>
        <name>NADP(+)</name>
        <dbReference type="ChEBI" id="CHEBI:58349"/>
    </ligand>
</feature>
<accession>B9JG24</accession>
<name>AROE_RHIR8</name>
<dbReference type="EC" id="1.1.1.25" evidence="1"/>
<dbReference type="EMBL" id="CP000628">
    <property type="protein sequence ID" value="ACM24807.1"/>
    <property type="molecule type" value="Genomic_DNA"/>
</dbReference>
<dbReference type="RefSeq" id="WP_007698676.1">
    <property type="nucleotide sequence ID" value="NC_011985.1"/>
</dbReference>
<dbReference type="SMR" id="B9JG24"/>
<dbReference type="STRING" id="311403.Arad_0002"/>
<dbReference type="KEGG" id="ara:Arad_0002"/>
<dbReference type="eggNOG" id="COG0169">
    <property type="taxonomic scope" value="Bacteria"/>
</dbReference>
<dbReference type="HOGENOM" id="CLU_044063_2_0_5"/>
<dbReference type="UniPathway" id="UPA00053">
    <property type="reaction ID" value="UER00087"/>
</dbReference>
<dbReference type="Proteomes" id="UP000001600">
    <property type="component" value="Chromosome 1"/>
</dbReference>
<dbReference type="GO" id="GO:0005829">
    <property type="term" value="C:cytosol"/>
    <property type="evidence" value="ECO:0007669"/>
    <property type="project" value="TreeGrafter"/>
</dbReference>
<dbReference type="GO" id="GO:0050661">
    <property type="term" value="F:NADP binding"/>
    <property type="evidence" value="ECO:0007669"/>
    <property type="project" value="InterPro"/>
</dbReference>
<dbReference type="GO" id="GO:0004764">
    <property type="term" value="F:shikimate 3-dehydrogenase (NADP+) activity"/>
    <property type="evidence" value="ECO:0007669"/>
    <property type="project" value="UniProtKB-UniRule"/>
</dbReference>
<dbReference type="GO" id="GO:0008652">
    <property type="term" value="P:amino acid biosynthetic process"/>
    <property type="evidence" value="ECO:0007669"/>
    <property type="project" value="UniProtKB-KW"/>
</dbReference>
<dbReference type="GO" id="GO:0009073">
    <property type="term" value="P:aromatic amino acid family biosynthetic process"/>
    <property type="evidence" value="ECO:0007669"/>
    <property type="project" value="UniProtKB-KW"/>
</dbReference>
<dbReference type="GO" id="GO:0009423">
    <property type="term" value="P:chorismate biosynthetic process"/>
    <property type="evidence" value="ECO:0007669"/>
    <property type="project" value="UniProtKB-UniRule"/>
</dbReference>
<dbReference type="GO" id="GO:0019632">
    <property type="term" value="P:shikimate metabolic process"/>
    <property type="evidence" value="ECO:0007669"/>
    <property type="project" value="InterPro"/>
</dbReference>
<dbReference type="CDD" id="cd01065">
    <property type="entry name" value="NAD_bind_Shikimate_DH"/>
    <property type="match status" value="1"/>
</dbReference>
<dbReference type="Gene3D" id="3.40.50.10860">
    <property type="entry name" value="Leucine Dehydrogenase, chain A, domain 1"/>
    <property type="match status" value="1"/>
</dbReference>
<dbReference type="Gene3D" id="3.40.50.720">
    <property type="entry name" value="NAD(P)-binding Rossmann-like Domain"/>
    <property type="match status" value="1"/>
</dbReference>
<dbReference type="HAMAP" id="MF_00222">
    <property type="entry name" value="Shikimate_DH_AroE"/>
    <property type="match status" value="1"/>
</dbReference>
<dbReference type="InterPro" id="IPR046346">
    <property type="entry name" value="Aminoacid_DH-like_N_sf"/>
</dbReference>
<dbReference type="InterPro" id="IPR036291">
    <property type="entry name" value="NAD(P)-bd_dom_sf"/>
</dbReference>
<dbReference type="InterPro" id="IPR041121">
    <property type="entry name" value="SDH_C"/>
</dbReference>
<dbReference type="InterPro" id="IPR011342">
    <property type="entry name" value="Shikimate_DH"/>
</dbReference>
<dbReference type="InterPro" id="IPR013708">
    <property type="entry name" value="Shikimate_DH-bd_N"/>
</dbReference>
<dbReference type="InterPro" id="IPR022893">
    <property type="entry name" value="Shikimate_DH_fam"/>
</dbReference>
<dbReference type="InterPro" id="IPR006151">
    <property type="entry name" value="Shikm_DH/Glu-tRNA_Rdtase"/>
</dbReference>
<dbReference type="NCBIfam" id="TIGR00507">
    <property type="entry name" value="aroE"/>
    <property type="match status" value="1"/>
</dbReference>
<dbReference type="NCBIfam" id="NF001312">
    <property type="entry name" value="PRK00258.1-4"/>
    <property type="match status" value="1"/>
</dbReference>
<dbReference type="PANTHER" id="PTHR21089:SF1">
    <property type="entry name" value="BIFUNCTIONAL 3-DEHYDROQUINATE DEHYDRATASE_SHIKIMATE DEHYDROGENASE, CHLOROPLASTIC"/>
    <property type="match status" value="1"/>
</dbReference>
<dbReference type="PANTHER" id="PTHR21089">
    <property type="entry name" value="SHIKIMATE DEHYDROGENASE"/>
    <property type="match status" value="1"/>
</dbReference>
<dbReference type="Pfam" id="PF18317">
    <property type="entry name" value="SDH_C"/>
    <property type="match status" value="1"/>
</dbReference>
<dbReference type="Pfam" id="PF01488">
    <property type="entry name" value="Shikimate_DH"/>
    <property type="match status" value="1"/>
</dbReference>
<dbReference type="Pfam" id="PF08501">
    <property type="entry name" value="Shikimate_dh_N"/>
    <property type="match status" value="1"/>
</dbReference>
<dbReference type="SUPFAM" id="SSF53223">
    <property type="entry name" value="Aminoacid dehydrogenase-like, N-terminal domain"/>
    <property type="match status" value="1"/>
</dbReference>
<dbReference type="SUPFAM" id="SSF51735">
    <property type="entry name" value="NAD(P)-binding Rossmann-fold domains"/>
    <property type="match status" value="1"/>
</dbReference>
<reference key="1">
    <citation type="journal article" date="2009" name="J. Bacteriol.">
        <title>Genome sequences of three Agrobacterium biovars help elucidate the evolution of multichromosome genomes in bacteria.</title>
        <authorList>
            <person name="Slater S.C."/>
            <person name="Goldman B.S."/>
            <person name="Goodner B."/>
            <person name="Setubal J.C."/>
            <person name="Farrand S.K."/>
            <person name="Nester E.W."/>
            <person name="Burr T.J."/>
            <person name="Banta L."/>
            <person name="Dickerman A.W."/>
            <person name="Paulsen I."/>
            <person name="Otten L."/>
            <person name="Suen G."/>
            <person name="Welch R."/>
            <person name="Almeida N.F."/>
            <person name="Arnold F."/>
            <person name="Burton O.T."/>
            <person name="Du Z."/>
            <person name="Ewing A."/>
            <person name="Godsy E."/>
            <person name="Heisel S."/>
            <person name="Houmiel K.L."/>
            <person name="Jhaveri J."/>
            <person name="Lu J."/>
            <person name="Miller N.M."/>
            <person name="Norton S."/>
            <person name="Chen Q."/>
            <person name="Phoolcharoen W."/>
            <person name="Ohlin V."/>
            <person name="Ondrusek D."/>
            <person name="Pride N."/>
            <person name="Stricklin S.L."/>
            <person name="Sun J."/>
            <person name="Wheeler C."/>
            <person name="Wilson L."/>
            <person name="Zhu H."/>
            <person name="Wood D.W."/>
        </authorList>
    </citation>
    <scope>NUCLEOTIDE SEQUENCE [LARGE SCALE GENOMIC DNA]</scope>
    <source>
        <strain>K84 / ATCC BAA-868</strain>
    </source>
</reference>
<protein>
    <recommendedName>
        <fullName evidence="1">Shikimate dehydrogenase (NADP(+))</fullName>
        <shortName evidence="1">SDH</shortName>
        <ecNumber evidence="1">1.1.1.25</ecNumber>
    </recommendedName>
</protein>